<comment type="function">
    <text evidence="1 4 5">Accepts the ubiquitin-like proteins sumo1, sumo2 and sumo3 from the uble1a-uble1b E1 complex and catalyzes their covalent attachment to other proteins with the help of an E3 ligase such as ranbp2 or cbx4. Essential for nuclear architecture and chromosome segregation (By similarity). Mediates nuclear localization of vsx1. Required for progression through mitosis during organogenesis.</text>
</comment>
<comment type="pathway">
    <text>Protein modification; protein sumoylation.</text>
</comment>
<comment type="subunit">
    <text evidence="1 4">Forms a tight complex with rangap1 and ranbp2 (By similarity). Interacts with vsx1.</text>
</comment>
<comment type="subcellular location">
    <subcellularLocation>
        <location evidence="6">Nucleus</location>
    </subcellularLocation>
</comment>
<comment type="similarity">
    <text evidence="2">Belongs to the ubiquitin-conjugating enzyme family.</text>
</comment>
<gene>
    <name type="primary">ube2ib</name>
    <name type="synonym">ubc9b</name>
    <name type="synonym">ube2i2</name>
</gene>
<name>UBC9B_DANRE</name>
<proteinExistence type="evidence at protein level"/>
<protein>
    <recommendedName>
        <fullName>SUMO-conjugating enzyme UBC9-B</fullName>
        <ecNumber>2.3.2.-</ecNumber>
    </recommendedName>
    <alternativeName>
        <fullName>RING-type E3 SUMO transferase UBC9-B</fullName>
    </alternativeName>
    <alternativeName>
        <fullName>SUMO-protein ligase B</fullName>
    </alternativeName>
    <alternativeName>
        <fullName>Ubiquitin carrier protein 9-B</fullName>
    </alternativeName>
    <alternativeName>
        <fullName>Ubiquitin carrier protein I-B</fullName>
    </alternativeName>
    <alternativeName>
        <fullName>Ubiquitin-conjugating enzyme E2 I-B</fullName>
    </alternativeName>
    <alternativeName>
        <fullName>Ubiquitin-protein ligase I-B</fullName>
    </alternativeName>
</protein>
<keyword id="KW-0067">ATP-binding</keyword>
<keyword id="KW-0131">Cell cycle</keyword>
<keyword id="KW-0132">Cell division</keyword>
<keyword id="KW-0159">Chromosome partition</keyword>
<keyword id="KW-0217">Developmental protein</keyword>
<keyword id="KW-0498">Mitosis</keyword>
<keyword id="KW-0547">Nucleotide-binding</keyword>
<keyword id="KW-0539">Nucleus</keyword>
<keyword id="KW-1185">Reference proteome</keyword>
<keyword id="KW-0808">Transferase</keyword>
<keyword id="KW-0833">Ubl conjugation pathway</keyword>
<feature type="chain" id="PRO_0000268877" description="SUMO-conjugating enzyme UBC9-B">
    <location>
        <begin position="1"/>
        <end position="157"/>
    </location>
</feature>
<feature type="domain" description="UBC core" evidence="2">
    <location>
        <begin position="4"/>
        <end position="157"/>
    </location>
</feature>
<feature type="region of interest" description="Interaction with SUMO1" evidence="1">
    <location>
        <begin position="13"/>
        <end position="18"/>
    </location>
</feature>
<feature type="active site" description="Glycyl thioester intermediate" evidence="2 3">
    <location>
        <position position="93"/>
    </location>
</feature>
<feature type="site" description="Interaction with RANBP2" evidence="1">
    <location>
        <position position="4"/>
    </location>
</feature>
<feature type="site" description="Interaction with RANBP2" evidence="1">
    <location>
        <position position="25"/>
    </location>
</feature>
<feature type="site" description="Interaction with RANBP2" evidence="1">
    <location>
        <position position="57"/>
    </location>
</feature>
<feature type="site" description="Substrate binding" evidence="1">
    <location>
        <begin position="100"/>
        <end position="101"/>
    </location>
</feature>
<evidence type="ECO:0000250" key="1"/>
<evidence type="ECO:0000255" key="2">
    <source>
        <dbReference type="PROSITE-ProRule" id="PRU00388"/>
    </source>
</evidence>
<evidence type="ECO:0000255" key="3">
    <source>
        <dbReference type="PROSITE-ProRule" id="PRU10133"/>
    </source>
</evidence>
<evidence type="ECO:0000269" key="4">
    <source>
    </source>
</evidence>
<evidence type="ECO:0000269" key="5">
    <source>
    </source>
</evidence>
<evidence type="ECO:0000305" key="6"/>
<dbReference type="EC" id="2.3.2.-"/>
<dbReference type="EMBL" id="AF332623">
    <property type="protein sequence ID" value="AAG48365.1"/>
    <property type="molecule type" value="mRNA"/>
</dbReference>
<dbReference type="EMBL" id="BC066609">
    <property type="protein sequence ID" value="AAH66609.1"/>
    <property type="molecule type" value="mRNA"/>
</dbReference>
<dbReference type="EMBL" id="BC058302">
    <property type="protein sequence ID" value="AAH58302.1"/>
    <property type="molecule type" value="mRNA"/>
</dbReference>
<dbReference type="RefSeq" id="NP_571908.1">
    <property type="nucleotide sequence ID" value="NM_131833.2"/>
</dbReference>
<dbReference type="SMR" id="Q9DDJ0"/>
<dbReference type="FunCoup" id="Q9DDJ0">
    <property type="interactions" value="2932"/>
</dbReference>
<dbReference type="STRING" id="7955.ENSDARP00000052745"/>
<dbReference type="PaxDb" id="7955-ENSDARP00000052745"/>
<dbReference type="Ensembl" id="ENSDART00000052746">
    <property type="protein sequence ID" value="ENSDARP00000052745"/>
    <property type="gene ID" value="ENSDARG00000052649"/>
</dbReference>
<dbReference type="Ensembl" id="ENSDART00000187282">
    <property type="protein sequence ID" value="ENSDARP00000151619"/>
    <property type="gene ID" value="ENSDARG00000052649"/>
</dbReference>
<dbReference type="GeneID" id="114445"/>
<dbReference type="KEGG" id="dre:114445"/>
<dbReference type="AGR" id="ZFIN:ZDB-GENE-010607-1"/>
<dbReference type="CTD" id="114445"/>
<dbReference type="ZFIN" id="ZDB-GENE-010607-1">
    <property type="gene designation" value="ube2ia"/>
</dbReference>
<dbReference type="eggNOG" id="KOG0424">
    <property type="taxonomic scope" value="Eukaryota"/>
</dbReference>
<dbReference type="InParanoid" id="Q9DDJ0"/>
<dbReference type="OMA" id="TWECGIP"/>
<dbReference type="OrthoDB" id="6600758at2759"/>
<dbReference type="PhylomeDB" id="Q9DDJ0"/>
<dbReference type="TreeFam" id="TF101122"/>
<dbReference type="Reactome" id="R-DRE-196791">
    <property type="pathway name" value="Vitamin D (calciferol) metabolism"/>
</dbReference>
<dbReference type="Reactome" id="R-DRE-3065678">
    <property type="pathway name" value="SUMO is transferred from E1 to E2 (UBE2I, UBC9)"/>
</dbReference>
<dbReference type="Reactome" id="R-DRE-3108214">
    <property type="pathway name" value="SUMOylation of DNA damage response and repair proteins"/>
</dbReference>
<dbReference type="Reactome" id="R-DRE-3232118">
    <property type="pathway name" value="SUMOylation of transcription factors"/>
</dbReference>
<dbReference type="Reactome" id="R-DRE-3232142">
    <property type="pathway name" value="SUMOylation of ubiquitinylation proteins"/>
</dbReference>
<dbReference type="Reactome" id="R-DRE-3899300">
    <property type="pathway name" value="SUMOylation of transcription cofactors"/>
</dbReference>
<dbReference type="Reactome" id="R-DRE-4085377">
    <property type="pathway name" value="SUMOylation of SUMOylation proteins"/>
</dbReference>
<dbReference type="Reactome" id="R-DRE-4090294">
    <property type="pathway name" value="SUMOylation of intracellular receptors"/>
</dbReference>
<dbReference type="Reactome" id="R-DRE-4551638">
    <property type="pathway name" value="SUMOylation of chromatin organization proteins"/>
</dbReference>
<dbReference type="Reactome" id="R-DRE-4570464">
    <property type="pathway name" value="SUMOylation of RNA binding proteins"/>
</dbReference>
<dbReference type="Reactome" id="R-DRE-4615885">
    <property type="pathway name" value="SUMOylation of DNA replication proteins"/>
</dbReference>
<dbReference type="Reactome" id="R-DRE-4655427">
    <property type="pathway name" value="SUMOylation of DNA methylation proteins"/>
</dbReference>
<dbReference type="Reactome" id="R-DRE-4755510">
    <property type="pathway name" value="SUMOylation of immune response proteins"/>
</dbReference>
<dbReference type="Reactome" id="R-DRE-8866904">
    <property type="pathway name" value="Negative regulation of activity of TFAP2 (AP-2) family transcription factors"/>
</dbReference>
<dbReference type="Reactome" id="R-DRE-9615933">
    <property type="pathway name" value="Postmitotic nuclear pore complex (NPC) reformation"/>
</dbReference>
<dbReference type="Reactome" id="R-DRE-9793242">
    <property type="pathway name" value="SUMOylation of nuclear envelope proteins"/>
</dbReference>
<dbReference type="Reactome" id="R-DRE-9856649">
    <property type="pathway name" value="Transcriptional and post-translational regulation of MITF-M expression and activity"/>
</dbReference>
<dbReference type="UniPathway" id="UPA00886"/>
<dbReference type="PRO" id="PR:Q9DDJ0"/>
<dbReference type="Proteomes" id="UP000000437">
    <property type="component" value="Chromosome 3"/>
</dbReference>
<dbReference type="Bgee" id="ENSDARG00000052649">
    <property type="expression patterns" value="Expressed in early embryo and 27 other cell types or tissues"/>
</dbReference>
<dbReference type="ExpressionAtlas" id="Q9DDJ0">
    <property type="expression patterns" value="baseline"/>
</dbReference>
<dbReference type="GO" id="GO:0005634">
    <property type="term" value="C:nucleus"/>
    <property type="evidence" value="ECO:0000318"/>
    <property type="project" value="GO_Central"/>
</dbReference>
<dbReference type="GO" id="GO:0005524">
    <property type="term" value="F:ATP binding"/>
    <property type="evidence" value="ECO:0007669"/>
    <property type="project" value="UniProtKB-KW"/>
</dbReference>
<dbReference type="GO" id="GO:0061656">
    <property type="term" value="F:SUMO conjugating enzyme activity"/>
    <property type="evidence" value="ECO:0000318"/>
    <property type="project" value="GO_Central"/>
</dbReference>
<dbReference type="GO" id="GO:0051301">
    <property type="term" value="P:cell division"/>
    <property type="evidence" value="ECO:0007669"/>
    <property type="project" value="UniProtKB-KW"/>
</dbReference>
<dbReference type="GO" id="GO:0007059">
    <property type="term" value="P:chromosome segregation"/>
    <property type="evidence" value="ECO:0007669"/>
    <property type="project" value="UniProtKB-KW"/>
</dbReference>
<dbReference type="GO" id="GO:0060216">
    <property type="term" value="P:definitive hemopoiesis"/>
    <property type="evidence" value="ECO:0000316"/>
    <property type="project" value="ZFIN"/>
</dbReference>
<dbReference type="GO" id="GO:0036306">
    <property type="term" value="P:embryonic heart tube elongation"/>
    <property type="evidence" value="ECO:0000316"/>
    <property type="project" value="ZFIN"/>
</dbReference>
<dbReference type="GO" id="GO:0001947">
    <property type="term" value="P:heart looping"/>
    <property type="evidence" value="ECO:0000316"/>
    <property type="project" value="ZFIN"/>
</dbReference>
<dbReference type="GO" id="GO:0016925">
    <property type="term" value="P:protein sumoylation"/>
    <property type="evidence" value="ECO:0000318"/>
    <property type="project" value="GO_Central"/>
</dbReference>
<dbReference type="CDD" id="cd23798">
    <property type="entry name" value="UBCc_UBE2I"/>
    <property type="match status" value="1"/>
</dbReference>
<dbReference type="FunFam" id="3.10.110.10:FF:000013">
    <property type="entry name" value="SUMO-conjugating enzyme UBC9"/>
    <property type="match status" value="1"/>
</dbReference>
<dbReference type="Gene3D" id="3.10.110.10">
    <property type="entry name" value="Ubiquitin Conjugating Enzyme"/>
    <property type="match status" value="1"/>
</dbReference>
<dbReference type="InterPro" id="IPR050113">
    <property type="entry name" value="Ub_conjugating_enzyme"/>
</dbReference>
<dbReference type="InterPro" id="IPR000608">
    <property type="entry name" value="UBQ-conjugat_E2_core"/>
</dbReference>
<dbReference type="InterPro" id="IPR023313">
    <property type="entry name" value="UBQ-conjugating_AS"/>
</dbReference>
<dbReference type="InterPro" id="IPR016135">
    <property type="entry name" value="UBQ-conjugating_enzyme/RWD"/>
</dbReference>
<dbReference type="PANTHER" id="PTHR24067">
    <property type="entry name" value="UBIQUITIN-CONJUGATING ENZYME E2"/>
    <property type="match status" value="1"/>
</dbReference>
<dbReference type="Pfam" id="PF00179">
    <property type="entry name" value="UQ_con"/>
    <property type="match status" value="1"/>
</dbReference>
<dbReference type="SMART" id="SM00212">
    <property type="entry name" value="UBCc"/>
    <property type="match status" value="1"/>
</dbReference>
<dbReference type="SUPFAM" id="SSF54495">
    <property type="entry name" value="UBC-like"/>
    <property type="match status" value="1"/>
</dbReference>
<dbReference type="PROSITE" id="PS00183">
    <property type="entry name" value="UBC_1"/>
    <property type="match status" value="1"/>
</dbReference>
<dbReference type="PROSITE" id="PS50127">
    <property type="entry name" value="UBC_2"/>
    <property type="match status" value="1"/>
</dbReference>
<organism>
    <name type="scientific">Danio rerio</name>
    <name type="common">Zebrafish</name>
    <name type="synonym">Brachydanio rerio</name>
    <dbReference type="NCBI Taxonomy" id="7955"/>
    <lineage>
        <taxon>Eukaryota</taxon>
        <taxon>Metazoa</taxon>
        <taxon>Chordata</taxon>
        <taxon>Craniata</taxon>
        <taxon>Vertebrata</taxon>
        <taxon>Euteleostomi</taxon>
        <taxon>Actinopterygii</taxon>
        <taxon>Neopterygii</taxon>
        <taxon>Teleostei</taxon>
        <taxon>Ostariophysi</taxon>
        <taxon>Cypriniformes</taxon>
        <taxon>Danionidae</taxon>
        <taxon>Danioninae</taxon>
        <taxon>Danio</taxon>
    </lineage>
</organism>
<accession>Q9DDJ0</accession>
<reference key="1">
    <citation type="journal article" date="2001" name="Proc. Natl. Acad. Sci. U.S.A.">
        <title>Ubc9 interacts with a nuclear localization signal and mediates nuclear localization of the paired-like homeobox protein Vsx-1 independent of SUMO-1 modification.</title>
        <authorList>
            <person name="Kurtzman A.L."/>
            <person name="Schechter N."/>
        </authorList>
    </citation>
    <scope>NUCLEOTIDE SEQUENCE [MRNA]</scope>
    <scope>INTERACTION WITH VSX1</scope>
    <scope>FUNCTION</scope>
</reference>
<reference key="2">
    <citation type="submission" date="2004-02" db="EMBL/GenBank/DDBJ databases">
        <authorList>
            <consortium name="NIH - Zebrafish Gene Collection (ZGC) project"/>
        </authorList>
    </citation>
    <scope>NUCLEOTIDE SEQUENCE [LARGE SCALE MRNA]</scope>
    <source>
        <tissue>Kidney</tissue>
    </source>
</reference>
<reference key="3">
    <citation type="journal article" date="2006" name="Mol. Biol. Cell">
        <title>Ubc9 regulates mitosis and cell survival during Zebrafish development.</title>
        <authorList>
            <person name="Nowak M."/>
            <person name="Hammerschmidt M."/>
        </authorList>
    </citation>
    <scope>FUNCTION</scope>
</reference>
<sequence>MSGIALSRLAQERKAWRKDHPFGFVAVPTKNPDGTMNLMNWECAIPGKKGTPWEGGLFKLRMLFKDDYPSSPPKCKFEPPLFHPNVYPSGTVCLSILEEDKDWRPAITIKQILLGIQELLNEPNIQDPAQAEAYTIYCQNRVEYEKRVRAQAKKFSP</sequence>